<comment type="function">
    <text evidence="1">This enzyme is involved in nucleotide metabolism: it produces dUMP, the immediate precursor of thymidine nucleotides and it decreases the intracellular concentration of dUTP so that uracil cannot be incorporated into DNA.</text>
</comment>
<comment type="catalytic activity">
    <reaction evidence="1">
        <text>dUTP + H2O = dUMP + diphosphate + H(+)</text>
        <dbReference type="Rhea" id="RHEA:10248"/>
        <dbReference type="ChEBI" id="CHEBI:15377"/>
        <dbReference type="ChEBI" id="CHEBI:15378"/>
        <dbReference type="ChEBI" id="CHEBI:33019"/>
        <dbReference type="ChEBI" id="CHEBI:61555"/>
        <dbReference type="ChEBI" id="CHEBI:246422"/>
        <dbReference type="EC" id="3.6.1.23"/>
    </reaction>
</comment>
<comment type="cofactor">
    <cofactor evidence="1">
        <name>Mg(2+)</name>
        <dbReference type="ChEBI" id="CHEBI:18420"/>
    </cofactor>
</comment>
<comment type="pathway">
    <text evidence="1">Pyrimidine metabolism; dUMP biosynthesis; dUMP from dCTP (dUTP route): step 2/2.</text>
</comment>
<comment type="similarity">
    <text evidence="1">Belongs to the dUTPase family.</text>
</comment>
<proteinExistence type="inferred from homology"/>
<dbReference type="EC" id="3.6.1.23" evidence="1"/>
<dbReference type="EMBL" id="CP001158">
    <property type="protein sequence ID" value="ACL30346.1"/>
    <property type="molecule type" value="Genomic_DNA"/>
</dbReference>
<dbReference type="RefSeq" id="WP_009874508.1">
    <property type="nucleotide sequence ID" value="NC_011834.1"/>
</dbReference>
<dbReference type="SMR" id="B8D881"/>
<dbReference type="KEGG" id="bau:BUAPTUC7_554"/>
<dbReference type="HOGENOM" id="CLU_068508_1_1_6"/>
<dbReference type="UniPathway" id="UPA00610">
    <property type="reaction ID" value="UER00666"/>
</dbReference>
<dbReference type="GO" id="GO:0004170">
    <property type="term" value="F:dUTP diphosphatase activity"/>
    <property type="evidence" value="ECO:0007669"/>
    <property type="project" value="UniProtKB-UniRule"/>
</dbReference>
<dbReference type="GO" id="GO:0000287">
    <property type="term" value="F:magnesium ion binding"/>
    <property type="evidence" value="ECO:0007669"/>
    <property type="project" value="UniProtKB-UniRule"/>
</dbReference>
<dbReference type="GO" id="GO:0006226">
    <property type="term" value="P:dUMP biosynthetic process"/>
    <property type="evidence" value="ECO:0007669"/>
    <property type="project" value="UniProtKB-UniRule"/>
</dbReference>
<dbReference type="GO" id="GO:0046081">
    <property type="term" value="P:dUTP catabolic process"/>
    <property type="evidence" value="ECO:0007669"/>
    <property type="project" value="InterPro"/>
</dbReference>
<dbReference type="CDD" id="cd07557">
    <property type="entry name" value="trimeric_dUTPase"/>
    <property type="match status" value="1"/>
</dbReference>
<dbReference type="FunFam" id="2.70.40.10:FF:000002">
    <property type="entry name" value="dUTP diphosphatase"/>
    <property type="match status" value="1"/>
</dbReference>
<dbReference type="Gene3D" id="2.70.40.10">
    <property type="match status" value="1"/>
</dbReference>
<dbReference type="HAMAP" id="MF_00116">
    <property type="entry name" value="dUTPase_bact"/>
    <property type="match status" value="1"/>
</dbReference>
<dbReference type="InterPro" id="IPR008181">
    <property type="entry name" value="dUTPase"/>
</dbReference>
<dbReference type="InterPro" id="IPR029054">
    <property type="entry name" value="dUTPase-like"/>
</dbReference>
<dbReference type="InterPro" id="IPR036157">
    <property type="entry name" value="dUTPase-like_sf"/>
</dbReference>
<dbReference type="InterPro" id="IPR033704">
    <property type="entry name" value="dUTPase_trimeric"/>
</dbReference>
<dbReference type="NCBIfam" id="TIGR00576">
    <property type="entry name" value="dut"/>
    <property type="match status" value="1"/>
</dbReference>
<dbReference type="NCBIfam" id="NF001862">
    <property type="entry name" value="PRK00601.1"/>
    <property type="match status" value="1"/>
</dbReference>
<dbReference type="PANTHER" id="PTHR11241">
    <property type="entry name" value="DEOXYURIDINE 5'-TRIPHOSPHATE NUCLEOTIDOHYDROLASE"/>
    <property type="match status" value="1"/>
</dbReference>
<dbReference type="PANTHER" id="PTHR11241:SF0">
    <property type="entry name" value="DEOXYURIDINE 5'-TRIPHOSPHATE NUCLEOTIDOHYDROLASE"/>
    <property type="match status" value="1"/>
</dbReference>
<dbReference type="Pfam" id="PF00692">
    <property type="entry name" value="dUTPase"/>
    <property type="match status" value="1"/>
</dbReference>
<dbReference type="SUPFAM" id="SSF51283">
    <property type="entry name" value="dUTPase-like"/>
    <property type="match status" value="1"/>
</dbReference>
<name>DUT_BUCAT</name>
<reference key="1">
    <citation type="journal article" date="2009" name="Science">
        <title>The dynamics and time scale of ongoing genomic erosion in symbiotic bacteria.</title>
        <authorList>
            <person name="Moran N.A."/>
            <person name="McLaughlin H.J."/>
            <person name="Sorek R."/>
        </authorList>
    </citation>
    <scope>NUCLEOTIDE SEQUENCE [LARGE SCALE GENOMIC DNA]</scope>
    <source>
        <strain>Tuc7</strain>
    </source>
</reference>
<protein>
    <recommendedName>
        <fullName evidence="1">Deoxyuridine 5'-triphosphate nucleotidohydrolase</fullName>
        <shortName evidence="1">dUTPase</shortName>
        <ecNumber evidence="1">3.6.1.23</ecNumber>
    </recommendedName>
    <alternativeName>
        <fullName evidence="1">dUTP pyrophosphatase</fullName>
    </alternativeName>
</protein>
<accession>B8D881</accession>
<keyword id="KW-0378">Hydrolase</keyword>
<keyword id="KW-0460">Magnesium</keyword>
<keyword id="KW-0479">Metal-binding</keyword>
<keyword id="KW-0546">Nucleotide metabolism</keyword>
<organism>
    <name type="scientific">Buchnera aphidicola subsp. Acyrthosiphon pisum (strain Tuc7)</name>
    <dbReference type="NCBI Taxonomy" id="561501"/>
    <lineage>
        <taxon>Bacteria</taxon>
        <taxon>Pseudomonadati</taxon>
        <taxon>Pseudomonadota</taxon>
        <taxon>Gammaproteobacteria</taxon>
        <taxon>Enterobacterales</taxon>
        <taxon>Erwiniaceae</taxon>
        <taxon>Buchnera</taxon>
    </lineage>
</organism>
<sequence length="154" mass="16936">MSNIEIKILDSRMKNNFSLPSYATLGSSGLDLRACLDETVKLKAHKTILIPTGIAIYIANPNITALILPRSGLGHKKGIVLGNLVGLIDSDYQGQLMISLWNRSDQDFYVNPHDRVAQIIFVPIIRPCFLLVKNFNETSRSKKGFGHSGVSGVI</sequence>
<feature type="chain" id="PRO_1000119229" description="Deoxyuridine 5'-triphosphate nucleotidohydrolase">
    <location>
        <begin position="1"/>
        <end position="154"/>
    </location>
</feature>
<feature type="binding site" evidence="1">
    <location>
        <begin position="70"/>
        <end position="72"/>
    </location>
    <ligand>
        <name>substrate</name>
    </ligand>
</feature>
<feature type="binding site" evidence="1">
    <location>
        <position position="83"/>
    </location>
    <ligand>
        <name>substrate</name>
    </ligand>
</feature>
<feature type="binding site" evidence="1">
    <location>
        <begin position="87"/>
        <end position="89"/>
    </location>
    <ligand>
        <name>substrate</name>
    </ligand>
</feature>
<feature type="binding site" evidence="1">
    <location>
        <position position="97"/>
    </location>
    <ligand>
        <name>substrate</name>
    </ligand>
</feature>
<gene>
    <name evidence="1" type="primary">dut</name>
    <name type="ordered locus">BUAPTUC7_554</name>
</gene>
<evidence type="ECO:0000255" key="1">
    <source>
        <dbReference type="HAMAP-Rule" id="MF_00116"/>
    </source>
</evidence>